<name>XERC_PELTS</name>
<organism>
    <name type="scientific">Pelotomaculum thermopropionicum (strain DSM 13744 / JCM 10971 / SI)</name>
    <dbReference type="NCBI Taxonomy" id="370438"/>
    <lineage>
        <taxon>Bacteria</taxon>
        <taxon>Bacillati</taxon>
        <taxon>Bacillota</taxon>
        <taxon>Clostridia</taxon>
        <taxon>Eubacteriales</taxon>
        <taxon>Desulfotomaculaceae</taxon>
        <taxon>Pelotomaculum</taxon>
    </lineage>
</organism>
<comment type="function">
    <text evidence="1">Site-specific tyrosine recombinase, which acts by catalyzing the cutting and rejoining of the recombining DNA molecules. The XerC-XerD complex is essential to convert dimers of the bacterial chromosome into monomers to permit their segregation at cell division. It also contributes to the segregational stability of plasmids.</text>
</comment>
<comment type="subunit">
    <text evidence="1">Forms a cyclic heterotetrameric complex composed of two molecules of XerC and two molecules of XerD.</text>
</comment>
<comment type="subcellular location">
    <subcellularLocation>
        <location evidence="1">Cytoplasm</location>
    </subcellularLocation>
</comment>
<comment type="similarity">
    <text evidence="1">Belongs to the 'phage' integrase family. XerC subfamily.</text>
</comment>
<evidence type="ECO:0000255" key="1">
    <source>
        <dbReference type="HAMAP-Rule" id="MF_01808"/>
    </source>
</evidence>
<evidence type="ECO:0000255" key="2">
    <source>
        <dbReference type="PROSITE-ProRule" id="PRU01246"/>
    </source>
</evidence>
<evidence type="ECO:0000255" key="3">
    <source>
        <dbReference type="PROSITE-ProRule" id="PRU01248"/>
    </source>
</evidence>
<reference key="1">
    <citation type="journal article" date="2008" name="Genome Res.">
        <title>The genome of Pelotomaculum thermopropionicum reveals niche-associated evolution in anaerobic microbiota.</title>
        <authorList>
            <person name="Kosaka T."/>
            <person name="Kato S."/>
            <person name="Shimoyama T."/>
            <person name="Ishii S."/>
            <person name="Abe T."/>
            <person name="Watanabe K."/>
        </authorList>
    </citation>
    <scope>NUCLEOTIDE SEQUENCE [LARGE SCALE GENOMIC DNA]</scope>
    <source>
        <strain>DSM 13744 / JCM 10971 / SI</strain>
    </source>
</reference>
<proteinExistence type="inferred from homology"/>
<gene>
    <name evidence="1" type="primary">xerC</name>
    <name type="ordered locus">PTH_1248</name>
</gene>
<dbReference type="EMBL" id="AP009389">
    <property type="protein sequence ID" value="BAF59429.1"/>
    <property type="molecule type" value="Genomic_DNA"/>
</dbReference>
<dbReference type="SMR" id="A5D2W6"/>
<dbReference type="STRING" id="370438.PTH_1248"/>
<dbReference type="KEGG" id="pth:PTH_1248"/>
<dbReference type="eggNOG" id="COG4974">
    <property type="taxonomic scope" value="Bacteria"/>
</dbReference>
<dbReference type="HOGENOM" id="CLU_027562_9_6_9"/>
<dbReference type="Proteomes" id="UP000006556">
    <property type="component" value="Chromosome"/>
</dbReference>
<dbReference type="GO" id="GO:0005737">
    <property type="term" value="C:cytoplasm"/>
    <property type="evidence" value="ECO:0007669"/>
    <property type="project" value="UniProtKB-SubCell"/>
</dbReference>
<dbReference type="GO" id="GO:0003677">
    <property type="term" value="F:DNA binding"/>
    <property type="evidence" value="ECO:0007669"/>
    <property type="project" value="UniProtKB-KW"/>
</dbReference>
<dbReference type="GO" id="GO:0009037">
    <property type="term" value="F:tyrosine-based site-specific recombinase activity"/>
    <property type="evidence" value="ECO:0007669"/>
    <property type="project" value="UniProtKB-UniRule"/>
</dbReference>
<dbReference type="GO" id="GO:0051301">
    <property type="term" value="P:cell division"/>
    <property type="evidence" value="ECO:0007669"/>
    <property type="project" value="UniProtKB-KW"/>
</dbReference>
<dbReference type="GO" id="GO:0007059">
    <property type="term" value="P:chromosome segregation"/>
    <property type="evidence" value="ECO:0007669"/>
    <property type="project" value="UniProtKB-UniRule"/>
</dbReference>
<dbReference type="GO" id="GO:0006313">
    <property type="term" value="P:DNA transposition"/>
    <property type="evidence" value="ECO:0007669"/>
    <property type="project" value="UniProtKB-UniRule"/>
</dbReference>
<dbReference type="CDD" id="cd00798">
    <property type="entry name" value="INT_XerDC_C"/>
    <property type="match status" value="1"/>
</dbReference>
<dbReference type="Gene3D" id="1.10.150.130">
    <property type="match status" value="1"/>
</dbReference>
<dbReference type="Gene3D" id="1.10.443.10">
    <property type="entry name" value="Intergrase catalytic core"/>
    <property type="match status" value="1"/>
</dbReference>
<dbReference type="HAMAP" id="MF_01808">
    <property type="entry name" value="Recomb_XerC_XerD"/>
    <property type="match status" value="1"/>
</dbReference>
<dbReference type="InterPro" id="IPR044068">
    <property type="entry name" value="CB"/>
</dbReference>
<dbReference type="InterPro" id="IPR011010">
    <property type="entry name" value="DNA_brk_join_enz"/>
</dbReference>
<dbReference type="InterPro" id="IPR013762">
    <property type="entry name" value="Integrase-like_cat_sf"/>
</dbReference>
<dbReference type="InterPro" id="IPR002104">
    <property type="entry name" value="Integrase_catalytic"/>
</dbReference>
<dbReference type="InterPro" id="IPR010998">
    <property type="entry name" value="Integrase_recombinase_N"/>
</dbReference>
<dbReference type="InterPro" id="IPR004107">
    <property type="entry name" value="Integrase_SAM-like_N"/>
</dbReference>
<dbReference type="InterPro" id="IPR011931">
    <property type="entry name" value="Recomb_XerC"/>
</dbReference>
<dbReference type="InterPro" id="IPR023009">
    <property type="entry name" value="Tyrosine_recombinase_XerC/XerD"/>
</dbReference>
<dbReference type="InterPro" id="IPR050090">
    <property type="entry name" value="Tyrosine_recombinase_XerCD"/>
</dbReference>
<dbReference type="NCBIfam" id="NF001399">
    <property type="entry name" value="PRK00283.1"/>
    <property type="match status" value="1"/>
</dbReference>
<dbReference type="NCBIfam" id="TIGR02224">
    <property type="entry name" value="recomb_XerC"/>
    <property type="match status" value="1"/>
</dbReference>
<dbReference type="PANTHER" id="PTHR30349">
    <property type="entry name" value="PHAGE INTEGRASE-RELATED"/>
    <property type="match status" value="1"/>
</dbReference>
<dbReference type="PANTHER" id="PTHR30349:SF77">
    <property type="entry name" value="TYROSINE RECOMBINASE XERC"/>
    <property type="match status" value="1"/>
</dbReference>
<dbReference type="Pfam" id="PF02899">
    <property type="entry name" value="Phage_int_SAM_1"/>
    <property type="match status" value="1"/>
</dbReference>
<dbReference type="Pfam" id="PF00589">
    <property type="entry name" value="Phage_integrase"/>
    <property type="match status" value="1"/>
</dbReference>
<dbReference type="SUPFAM" id="SSF56349">
    <property type="entry name" value="DNA breaking-rejoining enzymes"/>
    <property type="match status" value="1"/>
</dbReference>
<dbReference type="SUPFAM" id="SSF47823">
    <property type="entry name" value="lambda integrase-like, N-terminal domain"/>
    <property type="match status" value="1"/>
</dbReference>
<dbReference type="PROSITE" id="PS51900">
    <property type="entry name" value="CB"/>
    <property type="match status" value="1"/>
</dbReference>
<dbReference type="PROSITE" id="PS51898">
    <property type="entry name" value="TYR_RECOMBINASE"/>
    <property type="match status" value="1"/>
</dbReference>
<feature type="chain" id="PRO_1000088241" description="Tyrosine recombinase XerC">
    <location>
        <begin position="1"/>
        <end position="306"/>
    </location>
</feature>
<feature type="domain" description="Core-binding (CB)" evidence="3">
    <location>
        <begin position="1"/>
        <end position="90"/>
    </location>
</feature>
<feature type="domain" description="Tyr recombinase" evidence="2">
    <location>
        <begin position="111"/>
        <end position="298"/>
    </location>
</feature>
<feature type="active site" evidence="1">
    <location>
        <position position="151"/>
    </location>
</feature>
<feature type="active site" evidence="1">
    <location>
        <position position="175"/>
    </location>
</feature>
<feature type="active site" evidence="1">
    <location>
        <position position="250"/>
    </location>
</feature>
<feature type="active site" evidence="1">
    <location>
        <position position="253"/>
    </location>
</feature>
<feature type="active site" evidence="1">
    <location>
        <position position="276"/>
    </location>
</feature>
<feature type="active site" description="O-(3'-phospho-DNA)-tyrosine intermediate" evidence="1">
    <location>
        <position position="285"/>
    </location>
</feature>
<accession>A5D2W6</accession>
<keyword id="KW-0131">Cell cycle</keyword>
<keyword id="KW-0132">Cell division</keyword>
<keyword id="KW-0159">Chromosome partition</keyword>
<keyword id="KW-0963">Cytoplasm</keyword>
<keyword id="KW-0229">DNA integration</keyword>
<keyword id="KW-0233">DNA recombination</keyword>
<keyword id="KW-0238">DNA-binding</keyword>
<keyword id="KW-1185">Reference proteome</keyword>
<sequence length="306" mass="35162">MYVHIDNFLVYLRVEKNASPRTTESYQKDLFHGLDYFASRLGKEDHAIVPSDIDHRIFRHYLAHMQKQGLARATMARRLAAWRSFYRYLYREKIIDGNPLLRVASPKLEKRLPRFLYEDEAKELVEAPDTKQPLGMRDRALLETLYAGGLRISELVLLDLGDLDISSGYIRVTGKRARERLVPLGSMAVEALQAYLAKARPRLMANSVAKKINNALFLNCRGERLSARGIRKILDKYVEKVSLERKISPHTLRHSFATHLLNAGADLRSVQELMGHVRLSSTQVYTHVTGERLKKVYRKSHPRAKG</sequence>
<protein>
    <recommendedName>
        <fullName evidence="1">Tyrosine recombinase XerC</fullName>
    </recommendedName>
</protein>